<sequence>MAMWQGAMDNRGFQQGSFSSFQNSSSDEDLMDIPATAMDFSMRDDVPPLDREVGEDKSYNGGGIGSSNRIMDFLEEPIPGVGTYDDFNTIDWVREKSRDRDRHREITNKSKESTWALIHSVSDAFSGWLLMLLIGLLSGSLAGLIDISAHWMTDLKEGICTGGFWFNHEHCCWNSEHVTFEERDKCPEWNSWSQLIISTDEGAFAYIVNYFMYVLWALLFAFLAVSLVKVFAPYACGSGIPEIKTILSGFIIRGYLGKWTLVIKTITLVLAVSSGLSLGKEGPLVHVACCCGNILCHCFNKYRKNEAKRREVLSAAAAAGVSVAFGAPIGGVLFSLEEVSYYFPLKTLWRSFFAALVAAFTLRSINPFGNSRLVLFYVEFHTPWHLFELVPFILLGIFGGLWGALFIRTNIAWCRKRKTTQLGKYPVIEVLVVTAITAILAFPNEYTRMSTSELISELFNDCGLLDSSKLCDYENRFNTSKGGELPDRPAGVGVYSAMWQLALTLILKIVITIFTFGMKIPSGLFIPSMAVGAIAGRLLGVGMEQLAYYHQEWTVFNSWCSQGADCITPGLYAMVGAAACLGGVTRMTVSLVVIMFELTGGLEYIVPLMAAAMTSKWVADALGREGIYDAHIRLNGYPFLEAKEEFAHKTLAMDVMKPRRNDPLLTVLTQDSMTVEDVETIISETTYSGFPVVVSRESQRLVGFVLRRDLIISIENARKKQDGVVSTSIIYFTEHSPPLPPYTPPTLKLRNILDLSPFTVTDLTPMEIVVDIFRKLGLRQCLVTHNGRLLGIITKKDVLKHIAQMANQDPDSILFN</sequence>
<proteinExistence type="evidence at protein level"/>
<keyword id="KW-0002">3D-structure</keyword>
<keyword id="KW-0025">Alternative splicing</keyword>
<keyword id="KW-0050">Antiport</keyword>
<keyword id="KW-0067">ATP-binding</keyword>
<keyword id="KW-0129">CBS domain</keyword>
<keyword id="KW-1003">Cell membrane</keyword>
<keyword id="KW-0868">Chloride</keyword>
<keyword id="KW-0225">Disease variant</keyword>
<keyword id="KW-0967">Endosome</keyword>
<keyword id="KW-0333">Golgi apparatus</keyword>
<keyword id="KW-0406">Ion transport</keyword>
<keyword id="KW-0472">Membrane</keyword>
<keyword id="KW-0547">Nucleotide-binding</keyword>
<keyword id="KW-1267">Proteomics identification</keyword>
<keyword id="KW-1185">Reference proteome</keyword>
<keyword id="KW-0677">Repeat</keyword>
<keyword id="KW-0812">Transmembrane</keyword>
<keyword id="KW-1133">Transmembrane helix</keyword>
<keyword id="KW-0813">Transport</keyword>
<keyword id="KW-0832">Ubl conjugation</keyword>
<comment type="function">
    <text evidence="16 24">Proton-coupled chloride transporter. Functions as antiport system and exchanges chloride ions against protons (PubMed:20466723). Important for normal acidification of the endosome lumen. May play an important role in renal tubular function. The CLC channel family contains both chloride channels and proton-coupled anion transporters that exchange chloride or another anion for protons. The absence of conserved gating glutamate residues is typical for family members that function as channels (Probable).</text>
</comment>
<comment type="catalytic activity">
    <reaction evidence="25">
        <text>2 chloride(in) + H(+)(out) = 2 chloride(out) + H(+)(in)</text>
        <dbReference type="Rhea" id="RHEA:29567"/>
        <dbReference type="ChEBI" id="CHEBI:15378"/>
        <dbReference type="ChEBI" id="CHEBI:17996"/>
    </reaction>
</comment>
<comment type="subunit">
    <text evidence="7">Interacts with NEDD4 and NEDD4L.</text>
</comment>
<comment type="interaction">
    <interactant intactId="EBI-13619183">
        <id>P51795</id>
    </interactant>
    <interactant intactId="EBI-13619183">
        <id>P51795</id>
        <label>CLCN5</label>
    </interactant>
    <organismsDiffer>false</organismsDiffer>
    <experiments>2</experiments>
</comment>
<comment type="interaction">
    <interactant intactId="EBI-13619183">
        <id>P51795</id>
    </interactant>
    <interactant intactId="EBI-3931791">
        <id>O15066</id>
        <label>KIF3B</label>
    </interactant>
    <organismsDiffer>false</organismsDiffer>
    <experiments>6</experiments>
</comment>
<comment type="subcellular location">
    <subcellularLocation>
        <location evidence="14">Golgi apparatus membrane</location>
        <topology evidence="14">Multi-pass membrane protein</topology>
    </subcellularLocation>
    <subcellularLocation>
        <location evidence="14">Endosome membrane</location>
        <topology evidence="14">Multi-pass membrane protein</topology>
    </subcellularLocation>
    <subcellularLocation>
        <location evidence="14">Cell membrane</location>
        <topology evidence="14">Multi-pass membrane protein</topology>
    </subcellularLocation>
</comment>
<comment type="alternative products">
    <event type="alternative splicing"/>
    <isoform>
        <id>P51795-2</id>
        <name>1</name>
        <sequence type="displayed"/>
    </isoform>
    <isoform>
        <id>P51795-1</id>
        <name>2</name>
        <sequence type="described" ref="VSP_060654"/>
    </isoform>
</comment>
<comment type="tissue specificity">
    <text evidence="4">Kidney. Moderately expressed in aortic vascular smooth muscle and endothelial cells, and at a slightly higher level in the coronary vascular smooth muscle.</text>
</comment>
<comment type="PTM">
    <text evidence="7">Ubiquitinated by NEDD4L in the presence of albumin; which promotes endocytosis and proteasomal degradation.</text>
</comment>
<comment type="disease" evidence="17 18">
    <disease id="DI-00574">
        <name>Hypophosphatemic rickets, X-linked recessive</name>
        <acronym>XLHRR</acronym>
        <description>A renal disease belonging to the 'Dent disease complex', a group of disorders characterized by proximal renal tubular defect, hypercalciuria, nephrocalcinosis, and renal insufficiency. The spectrum of phenotypic features is remarkably similar in the various disorders, except for differences in the severity of bone deformities and renal impairment. XLHRR patients present with rickets or osteomalacia, hypophosphatemia due to decreased renal tubular phosphate reabsorption, hypercalciuria, and low molecular weight proteinuria. Patients develop nephrocalcinosis with progressive renal failure in adulthood. Female carriers may have asymptomatic hypercalciuria or hypophosphatemia only.</description>
        <dbReference type="MIM" id="300554"/>
    </disease>
    <text>The disease is caused by variants affecting the gene represented in this entry.</text>
</comment>
<comment type="disease" evidence="6 8 9 10 12 13 14 15 17 18 20 21 22 23">
    <disease id="DI-00802">
        <name>Dent disease 1</name>
        <acronym>DENT1</acronym>
        <description>An X-linked recessive renal disease belonging to the 'Dent disease complex', a group of disorders characterized by proximal renal tubular defect, hypercalciuria, nephrocalcinosis, and renal insufficiency. The spectrum of phenotypic features is remarkably similar in the various disorders, except for differences in the severity of bone deformities and renal impairment. DENT1 patients manifest hypercalciuria, hypophosphatemia, aminoaciduria, nephrocalcinosis and nephrolithiasis, renal insufficiency leading to renal failure in adulthood, rickets (33% of patients) and osteomalacia.</description>
        <dbReference type="MIM" id="300009"/>
    </disease>
    <text>The disease is caused by variants affecting the gene represented in this entry.</text>
</comment>
<comment type="disease" evidence="18">
    <disease id="DI-00801">
        <name>Nephrolithiasis, X-linked recessive, with renal failure</name>
        <acronym>XRN</acronym>
        <description>An X-linked recessive renal disease belonging to the 'Dent disease complex', a group of disorders characterized by proximal renal tubular defect, hypercalciuria, nephrocalcinosis and renal insufficiency. The spectrum of phenotypic features is remarkably similar in the various disorders, except for differences in the severity of bone deformities and renal impairment. XRN patients present with hypercalciuria, nephrocalcinosis, renal stones and renal insufficiency. Patients lack urinary acidification defects, rickets, and osteomalacia.</description>
        <dbReference type="MIM" id="310468"/>
    </disease>
    <text>The disease is caused by variants affecting the gene represented in this entry.</text>
</comment>
<comment type="disease" evidence="5 14 19">
    <disease id="DI-00689">
        <name>Low molecular weight proteinuria with hypercalciuria and nephrocalcinosis</name>
        <acronym>LMWPHN</acronym>
        <description>An X-linked renal disease belonging to the 'Dent disease complex', a group of disorders characterized by proximal renal tubular defect, hypercalciuria, nephrocalcinosis, and renal insufficiency. The spectrum of phenotypic features is remarkably similar in the various disorders, except for differences in the severity of bone deformities and renal impairment. LMWPHN is a slowly progressive disorder. Patients tend to have hypercalciuric nephrocalcinosis without rickets or renal failure.</description>
        <dbReference type="MIM" id="308990"/>
    </disease>
    <text>The disease is caused by variants affecting the gene represented in this entry.</text>
</comment>
<comment type="similarity">
    <text evidence="24">Belongs to the chloride channel (TC 2.A.49) family. ClC-5/CLCN5 subfamily.</text>
</comment>
<evidence type="ECO:0000250" key="1"/>
<evidence type="ECO:0000255" key="2">
    <source>
        <dbReference type="PROSITE-ProRule" id="PRU00703"/>
    </source>
</evidence>
<evidence type="ECO:0000256" key="3">
    <source>
        <dbReference type="SAM" id="MobiDB-lite"/>
    </source>
</evidence>
<evidence type="ECO:0000269" key="4">
    <source>
    </source>
</evidence>
<evidence type="ECO:0000269" key="5">
    <source>
    </source>
</evidence>
<evidence type="ECO:0000269" key="6">
    <source>
    </source>
</evidence>
<evidence type="ECO:0000269" key="7">
    <source>
    </source>
</evidence>
<evidence type="ECO:0000269" key="8">
    <source>
    </source>
</evidence>
<evidence type="ECO:0000269" key="9">
    <source>
    </source>
</evidence>
<evidence type="ECO:0000269" key="10">
    <source>
    </source>
</evidence>
<evidence type="ECO:0000269" key="11">
    <source>
    </source>
</evidence>
<evidence type="ECO:0000269" key="12">
    <source>
    </source>
</evidence>
<evidence type="ECO:0000269" key="13">
    <source>
    </source>
</evidence>
<evidence type="ECO:0000269" key="14">
    <source>
    </source>
</evidence>
<evidence type="ECO:0000269" key="15">
    <source>
    </source>
</evidence>
<evidence type="ECO:0000269" key="16">
    <source>
    </source>
</evidence>
<evidence type="ECO:0000269" key="17">
    <source>
    </source>
</evidence>
<evidence type="ECO:0000269" key="18">
    <source>
    </source>
</evidence>
<evidence type="ECO:0000269" key="19">
    <source>
    </source>
</evidence>
<evidence type="ECO:0000269" key="20">
    <source>
    </source>
</evidence>
<evidence type="ECO:0000269" key="21">
    <source>
    </source>
</evidence>
<evidence type="ECO:0000269" key="22">
    <source>
    </source>
</evidence>
<evidence type="ECO:0000269" key="23">
    <source>
    </source>
</evidence>
<evidence type="ECO:0000305" key="24"/>
<evidence type="ECO:0000305" key="25">
    <source>
    </source>
</evidence>
<evidence type="ECO:0000312" key="26">
    <source>
        <dbReference type="HGNC" id="HGNC:2023"/>
    </source>
</evidence>
<evidence type="ECO:0007744" key="27">
    <source>
        <dbReference type="PDB" id="2J9L"/>
    </source>
</evidence>
<evidence type="ECO:0007829" key="28">
    <source>
        <dbReference type="PDB" id="2J9L"/>
    </source>
</evidence>
<dbReference type="EMBL" id="X91906">
    <property type="protein sequence ID" value="CAA63000.1"/>
    <property type="molecule type" value="mRNA"/>
</dbReference>
<dbReference type="EMBL" id="AK056560">
    <property type="protein sequence ID" value="BAG51748.1"/>
    <property type="molecule type" value="mRNA"/>
</dbReference>
<dbReference type="EMBL" id="FO393402">
    <property type="status" value="NOT_ANNOTATED_CDS"/>
    <property type="molecule type" value="Genomic_DNA"/>
</dbReference>
<dbReference type="EMBL" id="BC130429">
    <property type="protein sequence ID" value="AAI30430.1"/>
    <property type="molecule type" value="mRNA"/>
</dbReference>
<dbReference type="EMBL" id="BC130431">
    <property type="protein sequence ID" value="AAI30432.1"/>
    <property type="molecule type" value="mRNA"/>
</dbReference>
<dbReference type="EMBL" id="X81836">
    <property type="protein sequence ID" value="CAA57430.1"/>
    <property type="molecule type" value="mRNA"/>
</dbReference>
<dbReference type="EMBL" id="BK000969">
    <property type="protein sequence ID" value="DAA01544.1"/>
    <property type="molecule type" value="mRNA"/>
</dbReference>
<dbReference type="CCDS" id="CCDS14328.1">
    <molecule id="P51795-1"/>
</dbReference>
<dbReference type="CCDS" id="CCDS48115.1">
    <molecule id="P51795-2"/>
</dbReference>
<dbReference type="PIR" id="I37277">
    <property type="entry name" value="I37277"/>
</dbReference>
<dbReference type="RefSeq" id="NP_000075.1">
    <molecule id="P51795-1"/>
    <property type="nucleotide sequence ID" value="NM_000084.5"/>
</dbReference>
<dbReference type="RefSeq" id="NP_001121370.1">
    <molecule id="P51795-2"/>
    <property type="nucleotide sequence ID" value="NM_001127898.4"/>
</dbReference>
<dbReference type="RefSeq" id="NP_001121371.1">
    <molecule id="P51795-2"/>
    <property type="nucleotide sequence ID" value="NM_001127899.4"/>
</dbReference>
<dbReference type="RefSeq" id="NP_001269092.1">
    <property type="nucleotide sequence ID" value="NM_001282163.1"/>
</dbReference>
<dbReference type="RefSeq" id="XP_047297763.1">
    <molecule id="P51795-1"/>
    <property type="nucleotide sequence ID" value="XM_047441807.1"/>
</dbReference>
<dbReference type="RefSeq" id="XP_047297764.1">
    <molecule id="P51795-1"/>
    <property type="nucleotide sequence ID" value="XM_047441808.1"/>
</dbReference>
<dbReference type="RefSeq" id="XP_054182409.1">
    <molecule id="P51795-1"/>
    <property type="nucleotide sequence ID" value="XM_054326434.1"/>
</dbReference>
<dbReference type="PDB" id="2J9L">
    <property type="method" value="X-ray"/>
    <property type="resolution" value="2.30 A"/>
    <property type="chains" value="A/B/C/D/E/F=641-816"/>
</dbReference>
<dbReference type="PDB" id="2JA3">
    <property type="method" value="X-ray"/>
    <property type="resolution" value="3.05 A"/>
    <property type="chains" value="A/B/C/D/E/F=641-816"/>
</dbReference>
<dbReference type="PDBsum" id="2J9L"/>
<dbReference type="PDBsum" id="2JA3"/>
<dbReference type="SMR" id="P51795"/>
<dbReference type="BioGRID" id="107598">
    <property type="interactions" value="23"/>
</dbReference>
<dbReference type="DIP" id="DIP-29263N"/>
<dbReference type="FunCoup" id="P51795">
    <property type="interactions" value="933"/>
</dbReference>
<dbReference type="IntAct" id="P51795">
    <property type="interactions" value="12"/>
</dbReference>
<dbReference type="STRING" id="9606.ENSP00000365256"/>
<dbReference type="TCDB" id="2.A.49.2.16">
    <property type="family name" value="the chloride carrier/channel (clc) family"/>
</dbReference>
<dbReference type="GlyGen" id="P51795">
    <property type="glycosylation" value="3 sites, 1 O-linked glycan (1 site)"/>
</dbReference>
<dbReference type="iPTMnet" id="P51795"/>
<dbReference type="PhosphoSitePlus" id="P51795"/>
<dbReference type="SwissPalm" id="P51795"/>
<dbReference type="BioMuta" id="CLCN5"/>
<dbReference type="jPOST" id="P51795"/>
<dbReference type="MassIVE" id="P51795"/>
<dbReference type="PaxDb" id="9606-ENSP00000365256"/>
<dbReference type="PeptideAtlas" id="P51795"/>
<dbReference type="ProteomicsDB" id="56391">
    <molecule id="P51795-1"/>
</dbReference>
<dbReference type="ProteomicsDB" id="56392">
    <molecule id="P51795-2"/>
</dbReference>
<dbReference type="Pumba" id="P51795"/>
<dbReference type="ABCD" id="P51795">
    <property type="antibodies" value="2 sequenced antibodies"/>
</dbReference>
<dbReference type="Antibodypedia" id="396">
    <property type="antibodies" value="199 antibodies from 31 providers"/>
</dbReference>
<dbReference type="DNASU" id="1184"/>
<dbReference type="Ensembl" id="ENST00000307367.2">
    <molecule id="P51795-1"/>
    <property type="protein sequence ID" value="ENSP00000304257.2"/>
    <property type="gene ID" value="ENSG00000171365.17"/>
</dbReference>
<dbReference type="Ensembl" id="ENST00000376088.7">
    <molecule id="P51795-2"/>
    <property type="protein sequence ID" value="ENSP00000365256.3"/>
    <property type="gene ID" value="ENSG00000171365.17"/>
</dbReference>
<dbReference type="Ensembl" id="ENST00000376091.8">
    <molecule id="P51795-2"/>
    <property type="protein sequence ID" value="ENSP00000365259.3"/>
    <property type="gene ID" value="ENSG00000171365.17"/>
</dbReference>
<dbReference type="Ensembl" id="ENST00000376108.7">
    <molecule id="P51795-1"/>
    <property type="protein sequence ID" value="ENSP00000365276.3"/>
    <property type="gene ID" value="ENSG00000171365.17"/>
</dbReference>
<dbReference type="Ensembl" id="ENST00000642885.1">
    <molecule id="P51795-1"/>
    <property type="protein sequence ID" value="ENSP00000496632.1"/>
    <property type="gene ID" value="ENSG00000171365.17"/>
</dbReference>
<dbReference type="GeneID" id="1184"/>
<dbReference type="KEGG" id="hsa:1184"/>
<dbReference type="MANE-Select" id="ENST00000376091.8">
    <property type="protein sequence ID" value="ENSP00000365259.3"/>
    <property type="RefSeq nucleotide sequence ID" value="NM_001127898.4"/>
    <property type="RefSeq protein sequence ID" value="NP_001121370.1"/>
</dbReference>
<dbReference type="UCSC" id="uc004doq.2">
    <molecule id="P51795-2"/>
    <property type="organism name" value="human"/>
</dbReference>
<dbReference type="AGR" id="HGNC:2023"/>
<dbReference type="CTD" id="1184"/>
<dbReference type="DisGeNET" id="1184"/>
<dbReference type="GeneCards" id="CLCN5"/>
<dbReference type="GeneReviews" id="CLCN5"/>
<dbReference type="HGNC" id="HGNC:2023">
    <property type="gene designation" value="CLCN5"/>
</dbReference>
<dbReference type="HPA" id="ENSG00000171365">
    <property type="expression patterns" value="Group enriched (epididymis, kidney, liver)"/>
</dbReference>
<dbReference type="MalaCards" id="CLCN5"/>
<dbReference type="MIM" id="300008">
    <property type="type" value="gene"/>
</dbReference>
<dbReference type="MIM" id="300009">
    <property type="type" value="phenotype"/>
</dbReference>
<dbReference type="MIM" id="300554">
    <property type="type" value="phenotype"/>
</dbReference>
<dbReference type="MIM" id="308990">
    <property type="type" value="phenotype"/>
</dbReference>
<dbReference type="MIM" id="310468">
    <property type="type" value="phenotype"/>
</dbReference>
<dbReference type="neXtProt" id="NX_P51795"/>
<dbReference type="OpenTargets" id="ENSG00000171365"/>
<dbReference type="Orphanet" id="93622">
    <property type="disease" value="Dent disease type 1"/>
</dbReference>
<dbReference type="PharmGKB" id="PA26550"/>
<dbReference type="VEuPathDB" id="HostDB:ENSG00000171365"/>
<dbReference type="eggNOG" id="KOG0475">
    <property type="taxonomic scope" value="Eukaryota"/>
</dbReference>
<dbReference type="GeneTree" id="ENSGT00940000153763"/>
<dbReference type="HOGENOM" id="CLU_003181_2_1_1"/>
<dbReference type="InParanoid" id="P51795"/>
<dbReference type="OMA" id="CLDWTPW"/>
<dbReference type="OrthoDB" id="44789at2759"/>
<dbReference type="PAN-GO" id="P51795">
    <property type="GO annotations" value="6 GO annotations based on evolutionary models"/>
</dbReference>
<dbReference type="PhylomeDB" id="P51795"/>
<dbReference type="TreeFam" id="TF313867"/>
<dbReference type="PathwayCommons" id="P51795"/>
<dbReference type="Reactome" id="R-HSA-2672351">
    <property type="pathway name" value="Stimuli-sensing channels"/>
</dbReference>
<dbReference type="SignaLink" id="P51795"/>
<dbReference type="SIGNOR" id="P51795"/>
<dbReference type="BioGRID-ORCS" id="1184">
    <property type="hits" value="10 hits in 775 CRISPR screens"/>
</dbReference>
<dbReference type="ChiTaRS" id="CLCN5">
    <property type="organism name" value="human"/>
</dbReference>
<dbReference type="EvolutionaryTrace" id="P51795"/>
<dbReference type="GeneWiki" id="CLCN5"/>
<dbReference type="GenomeRNAi" id="1184"/>
<dbReference type="Pharos" id="P51795">
    <property type="development level" value="Tbio"/>
</dbReference>
<dbReference type="PRO" id="PR:P51795"/>
<dbReference type="Proteomes" id="UP000005640">
    <property type="component" value="Chromosome X"/>
</dbReference>
<dbReference type="RNAct" id="P51795">
    <property type="molecule type" value="protein"/>
</dbReference>
<dbReference type="Bgee" id="ENSG00000171365">
    <property type="expression patterns" value="Expressed in renal medulla and 142 other cell types or tissues"/>
</dbReference>
<dbReference type="ExpressionAtlas" id="P51795">
    <property type="expression patterns" value="baseline and differential"/>
</dbReference>
<dbReference type="GO" id="GO:0045177">
    <property type="term" value="C:apical part of cell"/>
    <property type="evidence" value="ECO:0000314"/>
    <property type="project" value="UniProtKB"/>
</dbReference>
<dbReference type="GO" id="GO:0005829">
    <property type="term" value="C:cytosol"/>
    <property type="evidence" value="ECO:0000314"/>
    <property type="project" value="HPA"/>
</dbReference>
<dbReference type="GO" id="GO:0005769">
    <property type="term" value="C:early endosome"/>
    <property type="evidence" value="ECO:0000318"/>
    <property type="project" value="GO_Central"/>
</dbReference>
<dbReference type="GO" id="GO:0010008">
    <property type="term" value="C:endosome membrane"/>
    <property type="evidence" value="ECO:0000304"/>
    <property type="project" value="Reactome"/>
</dbReference>
<dbReference type="GO" id="GO:0005794">
    <property type="term" value="C:Golgi apparatus"/>
    <property type="evidence" value="ECO:0000314"/>
    <property type="project" value="HPA"/>
</dbReference>
<dbReference type="GO" id="GO:0000139">
    <property type="term" value="C:Golgi membrane"/>
    <property type="evidence" value="ECO:0007669"/>
    <property type="project" value="UniProtKB-SubCell"/>
</dbReference>
<dbReference type="GO" id="GO:0005765">
    <property type="term" value="C:lysosomal membrane"/>
    <property type="evidence" value="ECO:0007005"/>
    <property type="project" value="UniProtKB"/>
</dbReference>
<dbReference type="GO" id="GO:0016020">
    <property type="term" value="C:membrane"/>
    <property type="evidence" value="ECO:0000314"/>
    <property type="project" value="UniProtKB"/>
</dbReference>
<dbReference type="GO" id="GO:0005886">
    <property type="term" value="C:plasma membrane"/>
    <property type="evidence" value="ECO:0000314"/>
    <property type="project" value="HPA"/>
</dbReference>
<dbReference type="GO" id="GO:0008021">
    <property type="term" value="C:synaptic vesicle"/>
    <property type="evidence" value="ECO:0000318"/>
    <property type="project" value="GO_Central"/>
</dbReference>
<dbReference type="GO" id="GO:0015297">
    <property type="term" value="F:antiporter activity"/>
    <property type="evidence" value="ECO:0000304"/>
    <property type="project" value="Reactome"/>
</dbReference>
<dbReference type="GO" id="GO:0005524">
    <property type="term" value="F:ATP binding"/>
    <property type="evidence" value="ECO:0007669"/>
    <property type="project" value="UniProtKB-KW"/>
</dbReference>
<dbReference type="GO" id="GO:0042802">
    <property type="term" value="F:identical protein binding"/>
    <property type="evidence" value="ECO:0000353"/>
    <property type="project" value="IntAct"/>
</dbReference>
<dbReference type="GO" id="GO:0005247">
    <property type="term" value="F:voltage-gated chloride channel activity"/>
    <property type="evidence" value="ECO:0000315"/>
    <property type="project" value="UniProtKB"/>
</dbReference>
<dbReference type="GO" id="GO:0006821">
    <property type="term" value="P:chloride transport"/>
    <property type="evidence" value="ECO:0000315"/>
    <property type="project" value="UniProtKB"/>
</dbReference>
<dbReference type="GO" id="GO:0006897">
    <property type="term" value="P:endocytosis"/>
    <property type="evidence" value="ECO:0007669"/>
    <property type="project" value="Ensembl"/>
</dbReference>
<dbReference type="GO" id="GO:0034220">
    <property type="term" value="P:monoatomic ion transmembrane transport"/>
    <property type="evidence" value="ECO:0000304"/>
    <property type="project" value="Reactome"/>
</dbReference>
<dbReference type="GO" id="GO:0003014">
    <property type="term" value="P:renal system process"/>
    <property type="evidence" value="ECO:0000315"/>
    <property type="project" value="UniProtKB"/>
</dbReference>
<dbReference type="CDD" id="cd04591">
    <property type="entry name" value="CBS_pair_voltage-gated_CLC_euk_bac"/>
    <property type="match status" value="1"/>
</dbReference>
<dbReference type="CDD" id="cd03684">
    <property type="entry name" value="ClC_3_like"/>
    <property type="match status" value="1"/>
</dbReference>
<dbReference type="FunFam" id="3.10.580.20:FF:000001">
    <property type="entry name" value="Chloride channel protein"/>
    <property type="match status" value="1"/>
</dbReference>
<dbReference type="FunFam" id="3.90.1280.20:FF:000001">
    <property type="entry name" value="Chloride channel protein"/>
    <property type="match status" value="1"/>
</dbReference>
<dbReference type="FunFam" id="3.90.1280.20:FF:000002">
    <property type="entry name" value="Chloride channel protein"/>
    <property type="match status" value="1"/>
</dbReference>
<dbReference type="Gene3D" id="3.10.580.20">
    <property type="match status" value="1"/>
</dbReference>
<dbReference type="Gene3D" id="3.90.1280.20">
    <property type="match status" value="1"/>
</dbReference>
<dbReference type="Gene3D" id="1.10.3080.10">
    <property type="entry name" value="Clc chloride channel"/>
    <property type="match status" value="1"/>
</dbReference>
<dbReference type="InterPro" id="IPR000644">
    <property type="entry name" value="CBS_dom"/>
</dbReference>
<dbReference type="InterPro" id="IPR046342">
    <property type="entry name" value="CBS_dom_sf"/>
</dbReference>
<dbReference type="InterPro" id="IPR014743">
    <property type="entry name" value="Cl-channel_core"/>
</dbReference>
<dbReference type="InterPro" id="IPR002247">
    <property type="entry name" value="Cl_channel-5"/>
</dbReference>
<dbReference type="InterPro" id="IPR001807">
    <property type="entry name" value="ClC"/>
</dbReference>
<dbReference type="PANTHER" id="PTHR45711">
    <property type="entry name" value="CHLORIDE CHANNEL PROTEIN"/>
    <property type="match status" value="1"/>
</dbReference>
<dbReference type="PANTHER" id="PTHR45711:SF7">
    <property type="entry name" value="H(+)_CL(-) EXCHANGE TRANSPORTER 5"/>
    <property type="match status" value="1"/>
</dbReference>
<dbReference type="Pfam" id="PF00571">
    <property type="entry name" value="CBS"/>
    <property type="match status" value="2"/>
</dbReference>
<dbReference type="Pfam" id="PF00654">
    <property type="entry name" value="Voltage_CLC"/>
    <property type="match status" value="1"/>
</dbReference>
<dbReference type="PRINTS" id="PR00762">
    <property type="entry name" value="CLCHANNEL"/>
</dbReference>
<dbReference type="PRINTS" id="PR01116">
    <property type="entry name" value="CLCHANNEL5"/>
</dbReference>
<dbReference type="SMART" id="SM00116">
    <property type="entry name" value="CBS"/>
    <property type="match status" value="2"/>
</dbReference>
<dbReference type="SUPFAM" id="SSF54631">
    <property type="entry name" value="CBS-domain pair"/>
    <property type="match status" value="1"/>
</dbReference>
<dbReference type="SUPFAM" id="SSF81340">
    <property type="entry name" value="Clc chloride channel"/>
    <property type="match status" value="1"/>
</dbReference>
<dbReference type="PROSITE" id="PS51371">
    <property type="entry name" value="CBS"/>
    <property type="match status" value="2"/>
</dbReference>
<organism>
    <name type="scientific">Homo sapiens</name>
    <name type="common">Human</name>
    <dbReference type="NCBI Taxonomy" id="9606"/>
    <lineage>
        <taxon>Eukaryota</taxon>
        <taxon>Metazoa</taxon>
        <taxon>Chordata</taxon>
        <taxon>Craniata</taxon>
        <taxon>Vertebrata</taxon>
        <taxon>Euteleostomi</taxon>
        <taxon>Mammalia</taxon>
        <taxon>Eutheria</taxon>
        <taxon>Euarchontoglires</taxon>
        <taxon>Primates</taxon>
        <taxon>Haplorrhini</taxon>
        <taxon>Catarrhini</taxon>
        <taxon>Hominidae</taxon>
        <taxon>Homo</taxon>
    </lineage>
</organism>
<protein>
    <recommendedName>
        <fullName evidence="24">H(+)/Cl(-) exchange transporter 5</fullName>
    </recommendedName>
    <alternativeName>
        <fullName>Chloride channel protein 5</fullName>
        <shortName>ClC-5</shortName>
    </alternativeName>
    <alternativeName>
        <fullName>Chloride transporter ClC-5</fullName>
    </alternativeName>
</protein>
<reference key="1">
    <citation type="journal article" date="1995" name="Genomics">
        <title>Cloning and characterization of CLCN5, the human kidney chloride channel gene implicated in Dent disease (an X-linked hereditary nephrolithiasis).</title>
        <authorList>
            <person name="Fisher S.E."/>
            <person name="van Bakel I."/>
            <person name="Lloyd S.E."/>
            <person name="Pearce S.H.S."/>
            <person name="Thakker R.V."/>
            <person name="Craig I.W."/>
        </authorList>
    </citation>
    <scope>NUCLEOTIDE SEQUENCE [MRNA] (ISOFORM 2)</scope>
    <source>
        <tissue>Kidney</tissue>
    </source>
</reference>
<reference key="2">
    <citation type="journal article" date="2004" name="Nat. Genet.">
        <title>Complete sequencing and characterization of 21,243 full-length human cDNAs.</title>
        <authorList>
            <person name="Ota T."/>
            <person name="Suzuki Y."/>
            <person name="Nishikawa T."/>
            <person name="Otsuki T."/>
            <person name="Sugiyama T."/>
            <person name="Irie R."/>
            <person name="Wakamatsu A."/>
            <person name="Hayashi K."/>
            <person name="Sato H."/>
            <person name="Nagai K."/>
            <person name="Kimura K."/>
            <person name="Makita H."/>
            <person name="Sekine M."/>
            <person name="Obayashi M."/>
            <person name="Nishi T."/>
            <person name="Shibahara T."/>
            <person name="Tanaka T."/>
            <person name="Ishii S."/>
            <person name="Yamamoto J."/>
            <person name="Saito K."/>
            <person name="Kawai Y."/>
            <person name="Isono Y."/>
            <person name="Nakamura Y."/>
            <person name="Nagahari K."/>
            <person name="Murakami K."/>
            <person name="Yasuda T."/>
            <person name="Iwayanagi T."/>
            <person name="Wagatsuma M."/>
            <person name="Shiratori A."/>
            <person name="Sudo H."/>
            <person name="Hosoiri T."/>
            <person name="Kaku Y."/>
            <person name="Kodaira H."/>
            <person name="Kondo H."/>
            <person name="Sugawara M."/>
            <person name="Takahashi M."/>
            <person name="Kanda K."/>
            <person name="Yokoi T."/>
            <person name="Furuya T."/>
            <person name="Kikkawa E."/>
            <person name="Omura Y."/>
            <person name="Abe K."/>
            <person name="Kamihara K."/>
            <person name="Katsuta N."/>
            <person name="Sato K."/>
            <person name="Tanikawa M."/>
            <person name="Yamazaki M."/>
            <person name="Ninomiya K."/>
            <person name="Ishibashi T."/>
            <person name="Yamashita H."/>
            <person name="Murakawa K."/>
            <person name="Fujimori K."/>
            <person name="Tanai H."/>
            <person name="Kimata M."/>
            <person name="Watanabe M."/>
            <person name="Hiraoka S."/>
            <person name="Chiba Y."/>
            <person name="Ishida S."/>
            <person name="Ono Y."/>
            <person name="Takiguchi S."/>
            <person name="Watanabe S."/>
            <person name="Yosida M."/>
            <person name="Hotuta T."/>
            <person name="Kusano J."/>
            <person name="Kanehori K."/>
            <person name="Takahashi-Fujii A."/>
            <person name="Hara H."/>
            <person name="Tanase T.-O."/>
            <person name="Nomura Y."/>
            <person name="Togiya S."/>
            <person name="Komai F."/>
            <person name="Hara R."/>
            <person name="Takeuchi K."/>
            <person name="Arita M."/>
            <person name="Imose N."/>
            <person name="Musashino K."/>
            <person name="Yuuki H."/>
            <person name="Oshima A."/>
            <person name="Sasaki N."/>
            <person name="Aotsuka S."/>
            <person name="Yoshikawa Y."/>
            <person name="Matsunawa H."/>
            <person name="Ichihara T."/>
            <person name="Shiohata N."/>
            <person name="Sano S."/>
            <person name="Moriya S."/>
            <person name="Momiyama H."/>
            <person name="Satoh N."/>
            <person name="Takami S."/>
            <person name="Terashima Y."/>
            <person name="Suzuki O."/>
            <person name="Nakagawa S."/>
            <person name="Senoh A."/>
            <person name="Mizoguchi H."/>
            <person name="Goto Y."/>
            <person name="Shimizu F."/>
            <person name="Wakebe H."/>
            <person name="Hishigaki H."/>
            <person name="Watanabe T."/>
            <person name="Sugiyama A."/>
            <person name="Takemoto M."/>
            <person name="Kawakami B."/>
            <person name="Yamazaki M."/>
            <person name="Watanabe K."/>
            <person name="Kumagai A."/>
            <person name="Itakura S."/>
            <person name="Fukuzumi Y."/>
            <person name="Fujimori Y."/>
            <person name="Komiyama M."/>
            <person name="Tashiro H."/>
            <person name="Tanigami A."/>
            <person name="Fujiwara T."/>
            <person name="Ono T."/>
            <person name="Yamada K."/>
            <person name="Fujii Y."/>
            <person name="Ozaki K."/>
            <person name="Hirao M."/>
            <person name="Ohmori Y."/>
            <person name="Kawabata A."/>
            <person name="Hikiji T."/>
            <person name="Kobatake N."/>
            <person name="Inagaki H."/>
            <person name="Ikema Y."/>
            <person name="Okamoto S."/>
            <person name="Okitani R."/>
            <person name="Kawakami T."/>
            <person name="Noguchi S."/>
            <person name="Itoh T."/>
            <person name="Shigeta K."/>
            <person name="Senba T."/>
            <person name="Matsumura K."/>
            <person name="Nakajima Y."/>
            <person name="Mizuno T."/>
            <person name="Morinaga M."/>
            <person name="Sasaki M."/>
            <person name="Togashi T."/>
            <person name="Oyama M."/>
            <person name="Hata H."/>
            <person name="Watanabe M."/>
            <person name="Komatsu T."/>
            <person name="Mizushima-Sugano J."/>
            <person name="Satoh T."/>
            <person name="Shirai Y."/>
            <person name="Takahashi Y."/>
            <person name="Nakagawa K."/>
            <person name="Okumura K."/>
            <person name="Nagase T."/>
            <person name="Nomura N."/>
            <person name="Kikuchi H."/>
            <person name="Masuho Y."/>
            <person name="Yamashita R."/>
            <person name="Nakai K."/>
            <person name="Yada T."/>
            <person name="Nakamura Y."/>
            <person name="Ohara O."/>
            <person name="Isogai T."/>
            <person name="Sugano S."/>
        </authorList>
    </citation>
    <scope>NUCLEOTIDE SEQUENCE [LARGE SCALE MRNA] (ISOFORM 1)</scope>
</reference>
<reference key="3">
    <citation type="journal article" date="2005" name="Nature">
        <title>The DNA sequence of the human X chromosome.</title>
        <authorList>
            <person name="Ross M.T."/>
            <person name="Grafham D.V."/>
            <person name="Coffey A.J."/>
            <person name="Scherer S."/>
            <person name="McLay K."/>
            <person name="Muzny D."/>
            <person name="Platzer M."/>
            <person name="Howell G.R."/>
            <person name="Burrows C."/>
            <person name="Bird C.P."/>
            <person name="Frankish A."/>
            <person name="Lovell F.L."/>
            <person name="Howe K.L."/>
            <person name="Ashurst J.L."/>
            <person name="Fulton R.S."/>
            <person name="Sudbrak R."/>
            <person name="Wen G."/>
            <person name="Jones M.C."/>
            <person name="Hurles M.E."/>
            <person name="Andrews T.D."/>
            <person name="Scott C.E."/>
            <person name="Searle S."/>
            <person name="Ramser J."/>
            <person name="Whittaker A."/>
            <person name="Deadman R."/>
            <person name="Carter N.P."/>
            <person name="Hunt S.E."/>
            <person name="Chen R."/>
            <person name="Cree A."/>
            <person name="Gunaratne P."/>
            <person name="Havlak P."/>
            <person name="Hodgson A."/>
            <person name="Metzker M.L."/>
            <person name="Richards S."/>
            <person name="Scott G."/>
            <person name="Steffen D."/>
            <person name="Sodergren E."/>
            <person name="Wheeler D.A."/>
            <person name="Worley K.C."/>
            <person name="Ainscough R."/>
            <person name="Ambrose K.D."/>
            <person name="Ansari-Lari M.A."/>
            <person name="Aradhya S."/>
            <person name="Ashwell R.I."/>
            <person name="Babbage A.K."/>
            <person name="Bagguley C.L."/>
            <person name="Ballabio A."/>
            <person name="Banerjee R."/>
            <person name="Barker G.E."/>
            <person name="Barlow K.F."/>
            <person name="Barrett I.P."/>
            <person name="Bates K.N."/>
            <person name="Beare D.M."/>
            <person name="Beasley H."/>
            <person name="Beasley O."/>
            <person name="Beck A."/>
            <person name="Bethel G."/>
            <person name="Blechschmidt K."/>
            <person name="Brady N."/>
            <person name="Bray-Allen S."/>
            <person name="Bridgeman A.M."/>
            <person name="Brown A.J."/>
            <person name="Brown M.J."/>
            <person name="Bonnin D."/>
            <person name="Bruford E.A."/>
            <person name="Buhay C."/>
            <person name="Burch P."/>
            <person name="Burford D."/>
            <person name="Burgess J."/>
            <person name="Burrill W."/>
            <person name="Burton J."/>
            <person name="Bye J.M."/>
            <person name="Carder C."/>
            <person name="Carrel L."/>
            <person name="Chako J."/>
            <person name="Chapman J.C."/>
            <person name="Chavez D."/>
            <person name="Chen E."/>
            <person name="Chen G."/>
            <person name="Chen Y."/>
            <person name="Chen Z."/>
            <person name="Chinault C."/>
            <person name="Ciccodicola A."/>
            <person name="Clark S.Y."/>
            <person name="Clarke G."/>
            <person name="Clee C.M."/>
            <person name="Clegg S."/>
            <person name="Clerc-Blankenburg K."/>
            <person name="Clifford K."/>
            <person name="Cobley V."/>
            <person name="Cole C.G."/>
            <person name="Conquer J.S."/>
            <person name="Corby N."/>
            <person name="Connor R.E."/>
            <person name="David R."/>
            <person name="Davies J."/>
            <person name="Davis C."/>
            <person name="Davis J."/>
            <person name="Delgado O."/>
            <person name="Deshazo D."/>
            <person name="Dhami P."/>
            <person name="Ding Y."/>
            <person name="Dinh H."/>
            <person name="Dodsworth S."/>
            <person name="Draper H."/>
            <person name="Dugan-Rocha S."/>
            <person name="Dunham A."/>
            <person name="Dunn M."/>
            <person name="Durbin K.J."/>
            <person name="Dutta I."/>
            <person name="Eades T."/>
            <person name="Ellwood M."/>
            <person name="Emery-Cohen A."/>
            <person name="Errington H."/>
            <person name="Evans K.L."/>
            <person name="Faulkner L."/>
            <person name="Francis F."/>
            <person name="Frankland J."/>
            <person name="Fraser A.E."/>
            <person name="Galgoczy P."/>
            <person name="Gilbert J."/>
            <person name="Gill R."/>
            <person name="Gloeckner G."/>
            <person name="Gregory S.G."/>
            <person name="Gribble S."/>
            <person name="Griffiths C."/>
            <person name="Grocock R."/>
            <person name="Gu Y."/>
            <person name="Gwilliam R."/>
            <person name="Hamilton C."/>
            <person name="Hart E.A."/>
            <person name="Hawes A."/>
            <person name="Heath P.D."/>
            <person name="Heitmann K."/>
            <person name="Hennig S."/>
            <person name="Hernandez J."/>
            <person name="Hinzmann B."/>
            <person name="Ho S."/>
            <person name="Hoffs M."/>
            <person name="Howden P.J."/>
            <person name="Huckle E.J."/>
            <person name="Hume J."/>
            <person name="Hunt P.J."/>
            <person name="Hunt A.R."/>
            <person name="Isherwood J."/>
            <person name="Jacob L."/>
            <person name="Johnson D."/>
            <person name="Jones S."/>
            <person name="de Jong P.J."/>
            <person name="Joseph S.S."/>
            <person name="Keenan S."/>
            <person name="Kelly S."/>
            <person name="Kershaw J.K."/>
            <person name="Khan Z."/>
            <person name="Kioschis P."/>
            <person name="Klages S."/>
            <person name="Knights A.J."/>
            <person name="Kosiura A."/>
            <person name="Kovar-Smith C."/>
            <person name="Laird G.K."/>
            <person name="Langford C."/>
            <person name="Lawlor S."/>
            <person name="Leversha M."/>
            <person name="Lewis L."/>
            <person name="Liu W."/>
            <person name="Lloyd C."/>
            <person name="Lloyd D.M."/>
            <person name="Loulseged H."/>
            <person name="Loveland J.E."/>
            <person name="Lovell J.D."/>
            <person name="Lozado R."/>
            <person name="Lu J."/>
            <person name="Lyne R."/>
            <person name="Ma J."/>
            <person name="Maheshwari M."/>
            <person name="Matthews L.H."/>
            <person name="McDowall J."/>
            <person name="McLaren S."/>
            <person name="McMurray A."/>
            <person name="Meidl P."/>
            <person name="Meitinger T."/>
            <person name="Milne S."/>
            <person name="Miner G."/>
            <person name="Mistry S.L."/>
            <person name="Morgan M."/>
            <person name="Morris S."/>
            <person name="Mueller I."/>
            <person name="Mullikin J.C."/>
            <person name="Nguyen N."/>
            <person name="Nordsiek G."/>
            <person name="Nyakatura G."/>
            <person name="O'dell C.N."/>
            <person name="Okwuonu G."/>
            <person name="Palmer S."/>
            <person name="Pandian R."/>
            <person name="Parker D."/>
            <person name="Parrish J."/>
            <person name="Pasternak S."/>
            <person name="Patel D."/>
            <person name="Pearce A.V."/>
            <person name="Pearson D.M."/>
            <person name="Pelan S.E."/>
            <person name="Perez L."/>
            <person name="Porter K.M."/>
            <person name="Ramsey Y."/>
            <person name="Reichwald K."/>
            <person name="Rhodes S."/>
            <person name="Ridler K.A."/>
            <person name="Schlessinger D."/>
            <person name="Schueler M.G."/>
            <person name="Sehra H.K."/>
            <person name="Shaw-Smith C."/>
            <person name="Shen H."/>
            <person name="Sheridan E.M."/>
            <person name="Shownkeen R."/>
            <person name="Skuce C.D."/>
            <person name="Smith M.L."/>
            <person name="Sotheran E.C."/>
            <person name="Steingruber H.E."/>
            <person name="Steward C.A."/>
            <person name="Storey R."/>
            <person name="Swann R.M."/>
            <person name="Swarbreck D."/>
            <person name="Tabor P.E."/>
            <person name="Taudien S."/>
            <person name="Taylor T."/>
            <person name="Teague B."/>
            <person name="Thomas K."/>
            <person name="Thorpe A."/>
            <person name="Timms K."/>
            <person name="Tracey A."/>
            <person name="Trevanion S."/>
            <person name="Tromans A.C."/>
            <person name="d'Urso M."/>
            <person name="Verduzco D."/>
            <person name="Villasana D."/>
            <person name="Waldron L."/>
            <person name="Wall M."/>
            <person name="Wang Q."/>
            <person name="Warren J."/>
            <person name="Warry G.L."/>
            <person name="Wei X."/>
            <person name="West A."/>
            <person name="Whitehead S.L."/>
            <person name="Whiteley M.N."/>
            <person name="Wilkinson J.E."/>
            <person name="Willey D.L."/>
            <person name="Williams G."/>
            <person name="Williams L."/>
            <person name="Williamson A."/>
            <person name="Williamson H."/>
            <person name="Wilming L."/>
            <person name="Woodmansey R.L."/>
            <person name="Wray P.W."/>
            <person name="Yen J."/>
            <person name="Zhang J."/>
            <person name="Zhou J."/>
            <person name="Zoghbi H."/>
            <person name="Zorilla S."/>
            <person name="Buck D."/>
            <person name="Reinhardt R."/>
            <person name="Poustka A."/>
            <person name="Rosenthal A."/>
            <person name="Lehrach H."/>
            <person name="Meindl A."/>
            <person name="Minx P.J."/>
            <person name="Hillier L.W."/>
            <person name="Willard H.F."/>
            <person name="Wilson R.K."/>
            <person name="Waterston R.H."/>
            <person name="Rice C.M."/>
            <person name="Vaudin M."/>
            <person name="Coulson A."/>
            <person name="Nelson D.L."/>
            <person name="Weinstock G."/>
            <person name="Sulston J.E."/>
            <person name="Durbin R.M."/>
            <person name="Hubbard T."/>
            <person name="Gibbs R.A."/>
            <person name="Beck S."/>
            <person name="Rogers J."/>
            <person name="Bentley D.R."/>
        </authorList>
    </citation>
    <scope>NUCLEOTIDE SEQUENCE [LARGE SCALE GENOMIC DNA]</scope>
</reference>
<reference key="4">
    <citation type="journal article" date="2004" name="Genome Res.">
        <title>The status, quality, and expansion of the NIH full-length cDNA project: the Mammalian Gene Collection (MGC).</title>
        <authorList>
            <consortium name="The MGC Project Team"/>
        </authorList>
    </citation>
    <scope>NUCLEOTIDE SEQUENCE [LARGE SCALE MRNA] (ISOFORM 2)</scope>
</reference>
<reference key="5">
    <citation type="journal article" date="1994" name="Hum. Mol. Genet.">
        <title>Isolation and partial characterization of a chloride channel gene which is expressed in kidney and is a candidate for Dent's disease (an X-linked hereditary nephrolithiasis).</title>
        <authorList>
            <person name="Fisher S."/>
            <person name="Black G.C.M."/>
            <person name="Lloyd S.E."/>
            <person name="Hatchwell E."/>
            <person name="Wrong O."/>
            <person name="Thakker R.V."/>
            <person name="Craig I.W."/>
        </authorList>
    </citation>
    <scope>NUCLEOTIDE SEQUENCE [MRNA] OF 557-816</scope>
    <source>
        <tissue>Kidney</tissue>
    </source>
</reference>
<reference key="6">
    <citation type="journal article" date="2003" name="Kidney Blood Press. Res.">
        <title>Four additional CLCN5 exons encode a widely expressed novel long CLC-5 isoform but fail to explain Dent's phenotype in patients without mutations in the short variant.</title>
        <authorList>
            <person name="Ludwig M."/>
            <person name="Waldegger S."/>
            <person name="Nuutinen M."/>
            <person name="Bokenkamp A."/>
            <person name="Reissinger A."/>
            <person name="Steckelbroeck S."/>
            <person name="Utsch B."/>
        </authorList>
    </citation>
    <scope>IDENTIFICATION (ISOFORM 1)</scope>
    <scope>ALTERNATIVE SPLICING</scope>
</reference>
<reference key="7">
    <citation type="journal article" date="1999" name="J. Mol. Cell. Cardiol.">
        <title>Expression of CLCN voltage-gated chloride channel genes in human blood vessels.</title>
        <authorList>
            <person name="Lamb F.S."/>
            <person name="Clayton G.H."/>
            <person name="Liu B.-X."/>
            <person name="Smith R.L."/>
            <person name="Barna T.J."/>
            <person name="Schutte B.C."/>
        </authorList>
    </citation>
    <scope>TISSUE SPECIFICITY</scope>
    <source>
        <tissue>Aortic endothelium</tissue>
        <tissue>Vascular smooth muscle</tissue>
    </source>
</reference>
<reference key="8">
    <citation type="journal article" date="2004" name="J. Biol. Chem.">
        <title>Nedd4-2 functionally interacts with ClC-5: involvement in constitutive albumin endocytosis in proximal tubule cells.</title>
        <authorList>
            <person name="Hryciw D.H."/>
            <person name="Ekberg J."/>
            <person name="Lee A."/>
            <person name="Lensink I.L."/>
            <person name="Kumar S."/>
            <person name="Guggino W.B."/>
            <person name="Cook D.I."/>
            <person name="Pollock C.A."/>
            <person name="Poronnik P."/>
        </authorList>
    </citation>
    <scope>INTERACTION WITH NEDD4 AND NEDD4L</scope>
    <scope>UBIQUITINATION</scope>
    <scope>MUTAGENESIS OF TYR-742</scope>
</reference>
<reference key="9">
    <citation type="journal article" date="2010" name="J. Biol. Chem.">
        <title>The late endosomal ClC-6 mediates proton/chloride countertransport in heterologous plasma membrane expression.</title>
        <authorList>
            <person name="Neagoe I."/>
            <person name="Stauber T."/>
            <person name="Fidzinski P."/>
            <person name="Bergsdorf E.Y."/>
            <person name="Jentsch T.J."/>
        </authorList>
    </citation>
    <scope>FUNCTION</scope>
    <scope>CATALYTIC ACTIVITY</scope>
</reference>
<reference key="10">
    <citation type="journal article" date="2015" name="Proteomics">
        <title>N-terminome analysis of the human mitochondrial proteome.</title>
        <authorList>
            <person name="Vaca Jacome A.S."/>
            <person name="Rabilloud T."/>
            <person name="Schaeffer-Reiss C."/>
            <person name="Rompais M."/>
            <person name="Ayoub D."/>
            <person name="Lane L."/>
            <person name="Bairoch A."/>
            <person name="Van Dorsselaer A."/>
            <person name="Carapito C."/>
        </authorList>
    </citation>
    <scope>IDENTIFICATION BY MASS SPECTROMETRY [LARGE SCALE ANALYSIS]</scope>
</reference>
<reference key="11">
    <citation type="journal article" date="2007" name="Nat. Struct. Mol. Biol.">
        <title>Nucleotide recognition by the cytoplasmic domain of the human chloride transporter ClC-5.</title>
        <authorList>
            <person name="Meyer S."/>
            <person name="Savaresi S."/>
            <person name="Forster I.C."/>
            <person name="Dutzler R."/>
        </authorList>
    </citation>
    <scope>X-RAY CRYSTALLOGRAPHY (2.3 ANGSTROMS) OF 640-816 IN COMPLEXES WITH ATP AND ADP</scope>
    <scope>MUTAGENESIS OF GLU-281; TYR-687; SER-688 AND ASP-797</scope>
</reference>
<reference key="12">
    <citation type="journal article" date="1996" name="Nature">
        <title>A common molecular basis for three inherited kidney stone diseases.</title>
        <authorList>
            <person name="Lloyd S.E."/>
            <person name="Pearce S.H.S."/>
            <person name="Fisher S.E."/>
            <person name="Steinmeyer K."/>
            <person name="Schwappach B."/>
            <person name="Schelnman S.J."/>
            <person name="Harding B."/>
            <person name="Bolino A."/>
            <person name="Devoto M."/>
            <person name="Goodyer P."/>
            <person name="Rigden S.P.A."/>
            <person name="Wrong O."/>
            <person name="Jentsch T.J."/>
            <person name="Craig I.W."/>
            <person name="Thakker R.V."/>
        </authorList>
    </citation>
    <scope>VARIANT XLHRR LEU-314</scope>
    <scope>VARIANT XRN GLU-576</scope>
    <scope>VARIANTS DENT1 ARG-270 AND PRO-590</scope>
</reference>
<reference key="13">
    <citation type="journal article" date="1997" name="Hum. Genet.">
        <title>A second family with XLRH displays the mutation S244L in the CLCN5 gene.</title>
        <authorList>
            <person name="Oudet C."/>
            <person name="Martin-Coignard D."/>
            <person name="Pannetier S."/>
            <person name="Praud E."/>
            <person name="Champion G."/>
            <person name="Hanauer A."/>
        </authorList>
    </citation>
    <scope>VARIANT DENT1 LEU-314</scope>
</reference>
<reference key="14">
    <citation type="journal article" date="1997" name="Hum. Mol. Genet.">
        <title>Characterisation of renal chloride channel, CLCN5, mutations in hypercalciuric nephrolithiasis (kidney stones) disorders.</title>
        <authorList>
            <person name="Lloyd S.E."/>
            <person name="Guenther W."/>
            <person name="Pearce S.H.S."/>
            <person name="Thomson A."/>
            <person name="Bianchi M.L."/>
            <person name="Bosio M."/>
            <person name="Craig I.W."/>
            <person name="Fisher S.E."/>
            <person name="Scheinman S.J."/>
            <person name="Wrong O."/>
            <person name="Jentsch T.J."/>
            <person name="Thakker R.V."/>
        </authorList>
    </citation>
    <scope>VARIANTS DENT1 HIS-100 INS; VAL-127; ARG-582 AND ASP-597</scope>
</reference>
<reference key="15">
    <citation type="journal article" date="1997" name="J. Clin. Invest.">
        <title>Idiopathic low molecular weight proteinuria associated with hypercalciuric nephrocalcinosis in Japanese children is due to mutations of the renal chloride channel (CLCN5).</title>
        <authorList>
            <person name="Lloyd S.E."/>
            <person name="Pearce S.H.S."/>
            <person name="Guenther W."/>
            <person name="Kawaguchi H."/>
            <person name="Igarashi T."/>
            <person name="Jentsch T.J."/>
            <person name="Thakker R.V."/>
        </authorList>
    </citation>
    <scope>VARIANT LMWPHN PRO-350</scope>
</reference>
<reference key="16">
    <citation type="journal article" date="1998" name="J. Pediatr.">
        <title>X-linked recessive nephrolithiasis: presentation and diagnosis in children.</title>
        <authorList>
            <person name="Schurman S.J."/>
            <person name="Norden A.G."/>
            <person name="Scheinman S.J."/>
        </authorList>
    </citation>
    <scope>VARIANT DENT1 VAL-127</scope>
</reference>
<reference key="17">
    <citation type="journal article" date="1998" name="Kidney Int.">
        <title>Functional characterization of renal chloride channel, CLCN5, mutations associated with Dent'sJapan disease.</title>
        <authorList>
            <person name="Igarashi T."/>
            <person name="Gunther W."/>
            <person name="Sekine T."/>
            <person name="Inatomi J."/>
            <person name="Shiraga H."/>
            <person name="Takahashi S."/>
            <person name="Suzuki J."/>
            <person name="Tsuru N."/>
            <person name="Yanagihara T."/>
            <person name="Shimazu M."/>
            <person name="Jentsch T.J."/>
            <person name="Thakker R.V."/>
        </authorList>
    </citation>
    <scope>VARIANTS DENT1 ARG-340 AND PHE-348</scope>
    <scope>CHARACTERIZATION OF VARIANTS DENT1 ARG-340 AND PHE-348</scope>
</reference>
<reference key="18">
    <citation type="journal article" date="2001" name="Am. J. Kidney Dis.">
        <title>Identification of two novel mutations in the CLCN5 gene in Japanese patients with familial idiopathic low molecular weight proteinuria (Japanese Dent's disease).</title>
        <authorList>
            <person name="Takemura T."/>
            <person name="Hino S."/>
            <person name="Ikeda M."/>
            <person name="Okada M."/>
            <person name="Igarashi T."/>
            <person name="Inatomi J."/>
            <person name="Yoshioka K."/>
        </authorList>
    </citation>
    <scope>VARIANT LMWPHN LYS-594</scope>
</reference>
<reference key="19">
    <citation type="journal article" date="2004" name="Kidney Int.">
        <title>Evidence for genetic heterogeneity in Dent's disease.</title>
        <authorList>
            <person name="Hoopes R.R. Jr."/>
            <person name="Raja K.M."/>
            <person name="Koich A."/>
            <person name="Hueber P."/>
            <person name="Reid R."/>
            <person name="Knohl S.J."/>
            <person name="Scheinman S.J."/>
        </authorList>
    </citation>
    <scope>VARIANTS DENT1 ARG-291; LEU-314; ALA-337; GLY-340; ASP-532; ARG-583; TRP-586; ASN-615; GLU-616 AND SER-727</scope>
</reference>
<reference key="20">
    <citation type="journal article" date="2006" name="J. Hum. Genet.">
        <title>Dent's disease and prevalence of renal stones in dialysis patients in Northeastern Italy.</title>
        <authorList>
            <person name="Tosetto E."/>
            <person name="Graziotto R."/>
            <person name="Artifoni L."/>
            <person name="Nachtigal J."/>
            <person name="Cascone C."/>
            <person name="Conz P."/>
            <person name="Piva M."/>
            <person name="Dell'Aquila R."/>
            <person name="De Paoli Vitali E."/>
            <person name="Citron L."/>
            <person name="Nalesso F."/>
            <person name="Antonello A."/>
            <person name="Vertolli U."/>
            <person name="Zagatti R."/>
            <person name="Lupo A."/>
            <person name="D'Angelo A."/>
            <person name="Anglani F."/>
            <person name="Gambaro G."/>
        </authorList>
    </citation>
    <scope>VARIANT DENT1 VAL-330</scope>
</reference>
<reference key="21">
    <citation type="journal article" date="2006" name="Nephrol. Dial. Transplant.">
        <title>Phenotypic and genetic heterogeneity in Dent's disease -- the results of an Italian collaborative study.</title>
        <authorList>
            <person name="Tosetto E."/>
            <person name="Ghiggeri G.M."/>
            <person name="Emma F."/>
            <person name="Barbano G."/>
            <person name="Carrea A."/>
            <person name="Vezzoli G."/>
            <person name="Torregrossa R."/>
            <person name="Cara M."/>
            <person name="Ripanti G."/>
            <person name="Ammenti A."/>
            <person name="Peruzzi L."/>
            <person name="Murer L."/>
            <person name="Ratsch I.M."/>
            <person name="Citron L."/>
            <person name="Gambaro G."/>
            <person name="D'angelo A."/>
            <person name="Anglani F."/>
        </authorList>
    </citation>
    <scope>VARIANTS DENT1 LEU-314; VAL-330; GLU-337 DEL; CYS-342 AND LYS-410</scope>
</reference>
<reference key="22">
    <citation type="journal article" date="2006" name="Urol. Res.">
        <title>Family history may be misleading in the diagnosis of Dent's disease.</title>
        <authorList>
            <person name="Anglani F."/>
            <person name="Bernich P."/>
            <person name="Tosetto E."/>
            <person name="Cara M."/>
            <person name="Lupo A."/>
            <person name="Nalesso F."/>
            <person name="D'Angelo A."/>
            <person name="Gambaro G."/>
        </authorList>
    </citation>
    <scope>VARIANTS DENT1 LEU-314 AND VAL-330</scope>
</reference>
<reference key="23">
    <citation type="journal article" date="2007" name="J. Hum. Genet.">
        <title>A missense mutation in the chloride/proton ClC-5 antiporter gene results in increased expression of an alternative mRNA form that lacks exons 10 and 11. Identification of seven new CLCN5 mutations in patients with Dent's disease.</title>
        <authorList>
            <person name="Ramos-Trujillo E."/>
            <person name="Gonzalez-Acosta H."/>
            <person name="Flores C."/>
            <person name="Garcia-Nieto V."/>
            <person name="Guillen E."/>
            <person name="Gracia S."/>
            <person name="Vicente C."/>
            <person name="Espinosa L."/>
            <person name="Maseda M.A."/>
            <person name="Santos F."/>
            <person name="Camacho J.A."/>
            <person name="Claverie-Martin F."/>
        </authorList>
    </citation>
    <scope>VARIANTS DENT1 ARG-289; LEU-343 AND GLY-617</scope>
</reference>
<reference key="24">
    <citation type="journal article" date="2007" name="Nephron Physiol.">
        <title>Functional characterization of a novel missense CLCN5 mutation causing alterations in proximal tubular endocytic machinery in Dent's disease.</title>
        <authorList>
            <person name="Tanuma A."/>
            <person name="Sato H."/>
            <person name="Takeda T."/>
            <person name="Hosojima M."/>
            <person name="Obayashi H."/>
            <person name="Hama H."/>
            <person name="Iino N."/>
            <person name="Hosaka K."/>
            <person name="Kaseda R."/>
            <person name="Imai N."/>
            <person name="Ueno M."/>
            <person name="Yamazaki M."/>
            <person name="Sakimura K."/>
            <person name="Gejyo F."/>
            <person name="Saito A."/>
        </authorList>
    </citation>
    <scope>VARIANT DENT1 ARG-403</scope>
</reference>
<reference key="25">
    <citation type="journal article" date="2009" name="Am. J. Physiol.">
        <title>Characterization of Dent's disease mutations of CLC-5 reveals a correlation between functional and cell biological consequences and protein structure.</title>
        <authorList>
            <person name="Smith A.J."/>
            <person name="Reed A.A."/>
            <person name="Loh N.Y."/>
            <person name="Thakker R.V."/>
            <person name="Lippiat J.D."/>
        </authorList>
    </citation>
    <scope>CHARACTERIZATION OF VARIANTS DENT1 VAL-127; ARG-340; GLU-583; TRP-586 AND ASP-597</scope>
    <scope>CHARACTERIZATION OF VARIANTS LMWPHN PRO-350 AND LYS-594</scope>
    <scope>SUBCELLULAR LOCATION</scope>
</reference>
<reference key="26">
    <citation type="journal article" date="2009" name="Kidney Int.">
        <title>Novel CLCN5 mutations in patients with Dent's disease result in altered ion currents or impaired exchanger processing.</title>
        <authorList>
            <person name="Grand T."/>
            <person name="Mordasini D."/>
            <person name="L'Hoste S."/>
            <person name="Pennaforte T."/>
            <person name="Genete M."/>
            <person name="Biyeyeme M.J."/>
            <person name="Vargas-Poussou R."/>
            <person name="Blanchard A."/>
            <person name="Teulon J."/>
            <person name="Lourdel S."/>
        </authorList>
    </citation>
    <scope>VARIANTS DENT1 ASP-249; LEU-273; ALA-282 AND PRO-539</scope>
    <scope>CHARACTERIZATION OF VARIANTS DENT1 ASP-249; ARG-270; LEU-273; ALA-282; ARG-289; ARG-291 AND PRO-539</scope>
</reference>
<reference key="27">
    <citation type="journal article" date="2011" name="Hum. Mutat.">
        <title>Heterogeneity in the processing of CLCN5 mutants related to Dent disease.</title>
        <authorList>
            <person name="Grand T."/>
            <person name="L'Hoste S."/>
            <person name="Mordasini D."/>
            <person name="Defontaine N."/>
            <person name="Keck M."/>
            <person name="Pennaforte T."/>
            <person name="Genete M."/>
            <person name="Laghmani K."/>
            <person name="Teulon J."/>
            <person name="Lourdel S."/>
        </authorList>
    </citation>
    <scope>CHARACTERIZATION OF VARIANTS DENT1 PRO-295; VAL-330; CYS-342; PHE-348; LYS-410; ARG-583; GLU-616 AND GLY-617</scope>
    <scope>CHARACTERIZATION OF VARIANT XLHRR LEU-314</scope>
</reference>
<feature type="chain" id="PRO_0000094446" description="H(+)/Cl(-) exchange transporter 5">
    <location>
        <begin position="1"/>
        <end position="816"/>
    </location>
</feature>
<feature type="topological domain" description="Cytoplasmic" evidence="1">
    <location>
        <begin position="1"/>
        <end position="124"/>
    </location>
</feature>
<feature type="transmembrane region" description="Helical" evidence="1">
    <location>
        <begin position="125"/>
        <end position="162"/>
    </location>
</feature>
<feature type="transmembrane region" description="Helical" evidence="1">
    <location>
        <begin position="208"/>
        <end position="231"/>
    </location>
</feature>
<feature type="intramembrane region" description="Helical" evidence="1">
    <location>
        <begin position="240"/>
        <end position="247"/>
    </location>
</feature>
<feature type="transmembrane region" description="Helical" evidence="1">
    <location>
        <begin position="256"/>
        <end position="275"/>
    </location>
</feature>
<feature type="transmembrane region" description="Helical" evidence="1">
    <location>
        <begin position="281"/>
        <end position="300"/>
    </location>
</feature>
<feature type="intramembrane region" description="Helical" evidence="1">
    <location>
        <begin position="312"/>
        <end position="324"/>
    </location>
</feature>
<feature type="intramembrane region" description="Helical" evidence="1">
    <location>
        <begin position="328"/>
        <end position="336"/>
    </location>
</feature>
<feature type="transmembrane region" description="Helical" evidence="1">
    <location>
        <begin position="348"/>
        <end position="366"/>
    </location>
</feature>
<feature type="transmembrane region" description="Helical" evidence="1">
    <location>
        <begin position="389"/>
        <end position="415"/>
    </location>
</feature>
<feature type="transmembrane region" description="Helical" evidence="1">
    <location>
        <begin position="422"/>
        <end position="442"/>
    </location>
</feature>
<feature type="transmembrane region" description="Helical" evidence="1">
    <location>
        <begin position="498"/>
        <end position="518"/>
    </location>
</feature>
<feature type="transmembrane region" description="Helical" evidence="1">
    <location>
        <begin position="523"/>
        <end position="542"/>
    </location>
</feature>
<feature type="intramembrane region" description="Helical" evidence="1">
    <location>
        <begin position="570"/>
        <end position="584"/>
    </location>
</feature>
<feature type="intramembrane region" description="Note=Loop between two helices" evidence="1">
    <location>
        <begin position="585"/>
        <end position="587"/>
    </location>
</feature>
<feature type="intramembrane region" description="Helical" evidence="1">
    <location>
        <begin position="588"/>
        <end position="599"/>
    </location>
</feature>
<feature type="intramembrane region" description="Note=Loop between two helices" evidence="1">
    <location>
        <begin position="600"/>
        <end position="604"/>
    </location>
</feature>
<feature type="transmembrane region" description="Helical" evidence="1">
    <location>
        <begin position="605"/>
        <end position="622"/>
    </location>
</feature>
<feature type="topological domain" description="Cytoplasmic" evidence="1">
    <location>
        <begin position="623"/>
        <end position="816"/>
    </location>
</feature>
<feature type="domain" description="CBS 1" evidence="2">
    <location>
        <begin position="656"/>
        <end position="720"/>
    </location>
</feature>
<feature type="domain" description="CBS 2" evidence="2">
    <location>
        <begin position="752"/>
        <end position="812"/>
    </location>
</feature>
<feature type="region of interest" description="Disordered" evidence="3">
    <location>
        <begin position="1"/>
        <end position="26"/>
    </location>
</feature>
<feature type="short sequence motif" description="Selectivity filter part_1" evidence="1">
    <location>
        <begin position="237"/>
        <end position="241"/>
    </location>
</feature>
<feature type="short sequence motif" description="Selectivity filter part_2" evidence="1">
    <location>
        <begin position="279"/>
        <end position="283"/>
    </location>
</feature>
<feature type="short sequence motif" description="Selectivity filter part_3" evidence="1">
    <location>
        <begin position="523"/>
        <end position="527"/>
    </location>
</feature>
<feature type="compositionally biased region" description="Low complexity" evidence="3">
    <location>
        <begin position="12"/>
        <end position="25"/>
    </location>
</feature>
<feature type="binding site" evidence="1">
    <location>
        <position position="238"/>
    </location>
    <ligand>
        <name>chloride</name>
        <dbReference type="ChEBI" id="CHEBI:17996"/>
    </ligand>
</feature>
<feature type="binding site" evidence="1">
    <location>
        <position position="525"/>
    </location>
    <ligand>
        <name>chloride</name>
        <dbReference type="ChEBI" id="CHEBI:17996"/>
    </ligand>
</feature>
<feature type="binding site" evidence="1">
    <location>
        <position position="628"/>
    </location>
    <ligand>
        <name>chloride</name>
        <dbReference type="ChEBI" id="CHEBI:17996"/>
    </ligand>
</feature>
<feature type="binding site" evidence="11 27">
    <location>
        <position position="666"/>
    </location>
    <ligand>
        <name>ATP</name>
        <dbReference type="ChEBI" id="CHEBI:30616"/>
    </ligand>
</feature>
<feature type="binding site" evidence="11 27">
    <location>
        <begin position="687"/>
        <end position="689"/>
    </location>
    <ligand>
        <name>ATP</name>
        <dbReference type="ChEBI" id="CHEBI:30616"/>
    </ligand>
</feature>
<feature type="binding site" evidence="11 27">
    <location>
        <begin position="794"/>
        <end position="797"/>
    </location>
    <ligand>
        <name>ATP</name>
        <dbReference type="ChEBI" id="CHEBI:30616"/>
    </ligand>
</feature>
<feature type="site" description="Mediates proton transfer from the outer aqueous phase to the interior of the protein; involved in linking H(+) and Cl(-) transport" evidence="1">
    <location>
        <position position="281"/>
    </location>
</feature>
<feature type="site" description="Mediates proton transfer from the protein to the inner aqueous phase" evidence="1">
    <location>
        <position position="338"/>
    </location>
</feature>
<feature type="splice variant" id="VSP_060654" description="In isoform 2." evidence="24">
    <location>
        <begin position="1"/>
        <end position="70"/>
    </location>
</feature>
<feature type="sequence variant" id="VAR_001615" description="In DENT1." evidence="21">
    <original>R</original>
    <variation>RH</variation>
    <location>
        <position position="100"/>
    </location>
</feature>
<feature type="sequence variant" id="VAR_001616" description="In DENT1; alters targeting to endosomes; dbSNP:rs151340629." evidence="14 21 22">
    <original>G</original>
    <variation>V</variation>
    <location>
        <position position="127"/>
    </location>
</feature>
<feature type="sequence variant" id="VAR_048694" description="In dbSNP:rs34800648.">
    <original>M</original>
    <variation>I</variation>
    <location>
        <position position="212"/>
    </location>
</feature>
<feature type="sequence variant" id="VAR_065591" description="In DENT1; retained in the endoplasmic reticulum; improperly N-glycosylated and non-functional." evidence="15">
    <original>G</original>
    <variation>D</variation>
    <location>
        <position position="249"/>
    </location>
</feature>
<feature type="sequence variant" id="VAR_001617" description="In DENT1; retained in the endoplasmic reticulum; improperly N-glycosylated and non-functional; dbSNP:rs151340622." evidence="15 18">
    <original>L</original>
    <variation>R</variation>
    <location>
        <position position="270"/>
    </location>
</feature>
<feature type="sequence variant" id="VAR_065592" description="In DENT1; retained in the endoplasmic reticulum; improperly N-glycosylated and non-functional." evidence="15">
    <original>S</original>
    <variation>L</variation>
    <location>
        <position position="273"/>
    </location>
</feature>
<feature type="sequence variant" id="VAR_065593" description="In DENT1; trafficks normally to the cell surface and to early endosomes; endergoes complex glycosylation at the cell surface like wild-type protein but exhibits significant reductions in outwardly rectifying ion currents." evidence="15">
    <original>G</original>
    <variation>A</variation>
    <location>
        <position position="282"/>
    </location>
</feature>
<feature type="sequence variant" id="VAR_065594" description="In DENT1; retained in the endoplasmic reticulum; improperly N-glycosylated and non-functional." evidence="12 15">
    <original>C</original>
    <variation>R</variation>
    <location>
        <position position="289"/>
    </location>
</feature>
<feature type="sequence variant" id="VAR_065595" description="In DENT1; retained in the endoplasmic reticulum; improperly N-glycosylated and non-functional." evidence="6 15">
    <original>C</original>
    <variation>R</variation>
    <location>
        <position position="291"/>
    </location>
</feature>
<feature type="sequence variant" id="VAR_065596" description="In DENT1; retained in the endoplasmic reticulum; improperly N-glycosylated and non-functional; dbSNP:rs273585645." evidence="17">
    <original>L</original>
    <variation>P</variation>
    <location>
        <position position="295"/>
    </location>
</feature>
<feature type="sequence variant" id="VAR_001618" description="In XLHRR; trafficks normally to the cell surface and to early endosomes; displays complex glycosylation at the cell surface like wild-type protein; exhibits reduced current; dbSNP:rs151340626." evidence="6 9 10 17 18 20">
    <original>S</original>
    <variation>L</variation>
    <location>
        <position position="314"/>
    </location>
</feature>
<feature type="sequence variant" id="VAR_065597" description="In DENT1; delayed in processing of the protein and decrease in the stability of the mature complex glycosylated form causing lower cell surface expression; the early endosome distribution is normal; shows abolished current at the plasma membrane; dbSNP:rs151340630." evidence="8 9 10 17">
    <original>G</original>
    <variation>V</variation>
    <location>
        <position position="330"/>
    </location>
</feature>
<feature type="sequence variant" id="VAR_065598" description="In DENT1." evidence="6">
    <original>E</original>
    <variation>A</variation>
    <location>
        <position position="337"/>
    </location>
</feature>
<feature type="sequence variant" id="VAR_065599" description="In DENT1." evidence="10">
    <location>
        <position position="337"/>
    </location>
</feature>
<feature type="sequence variant" id="VAR_065600" description="In DENT1." evidence="6">
    <original>S</original>
    <variation>G</variation>
    <location>
        <position position="340"/>
    </location>
</feature>
<feature type="sequence variant" id="VAR_065601" description="In DENT1; retained in the endoplasmic reticulum; alters protein stability; associated with an abolition of chloride current." evidence="14 23">
    <original>S</original>
    <variation>R</variation>
    <location>
        <position position="340"/>
    </location>
</feature>
<feature type="sequence variant" id="VAR_065602" description="In DENT1; trafficks normally to the cell surface and to early endosomes and displays complex glycosylation at the cell surface like wild-type protein; exhibits no current; dbSNP:rs273585644." evidence="10 17">
    <original>Y</original>
    <variation>C</variation>
    <location>
        <position position="342"/>
    </location>
</feature>
<feature type="sequence variant" id="VAR_065603" description="In DENT1." evidence="12">
    <original>F</original>
    <variation>L</variation>
    <location>
        <position position="343"/>
    </location>
</feature>
<feature type="sequence variant" id="VAR_065604" description="In DENT1; associated with a marked reduction to about 30% of wild-type chloride currents; no significant differences between the expression of the mutated and wild-type protein; dbSNP:rs273585648." evidence="17 23">
    <original>L</original>
    <variation>F</variation>
    <location>
        <position position="348"/>
    </location>
</feature>
<feature type="sequence variant" id="VAR_001619" description="In LMWPHN; 70% reduction in chloride transport activity and alters targeting to endosomes; dbSNP:rs151340628." evidence="14 19">
    <original>R</original>
    <variation>P</variation>
    <location>
        <position position="350"/>
    </location>
</feature>
<feature type="sequence variant" id="VAR_075519" description="In DENT1; uncertain significance." evidence="13">
    <original>G</original>
    <variation>R</variation>
    <location>
        <position position="403"/>
    </location>
</feature>
<feature type="sequence variant" id="VAR_065605" description="In DENT1; retained in the endoplasmic reticulum; improperly N-glycosylated and non-functional; dbSNP:rs273585646." evidence="10 17">
    <original>N</original>
    <variation>K</variation>
    <location>
        <position position="410"/>
    </location>
</feature>
<feature type="sequence variant" id="VAR_065606" description="In DENT1." evidence="6">
    <original>G</original>
    <variation>D</variation>
    <location>
        <position position="532"/>
    </location>
</feature>
<feature type="sequence variant" id="VAR_065607" description="In DENT1; retained in the endoplasmic reticulum; improperly N-glycosylated and non-functional." evidence="15">
    <original>L</original>
    <variation>P</variation>
    <location>
        <position position="539"/>
    </location>
</feature>
<feature type="sequence variant" id="VAR_001620" description="In XRN; dbSNP:rs151340625." evidence="18">
    <original>G</original>
    <variation>E</variation>
    <location>
        <position position="576"/>
    </location>
</feature>
<feature type="sequence variant" id="VAR_001621" description="In DENT1; abolishes the chloride currents." evidence="21">
    <original>G</original>
    <variation>R</variation>
    <location>
        <position position="582"/>
    </location>
</feature>
<feature type="sequence variant" id="VAR_065608" description="In DENT1; causes retention in the endoplasmic reticulum and alters protein stability; total loss of function." evidence="14">
    <original>G</original>
    <variation>E</variation>
    <location>
        <position position="583"/>
    </location>
</feature>
<feature type="sequence variant" id="VAR_065609" description="In DENT1; dbSNP:rs273585647." evidence="6 17">
    <original>G</original>
    <variation>R</variation>
    <location>
        <position position="583"/>
    </location>
</feature>
<feature type="sequence variant" id="VAR_065610" description="In DENT1; causes retention in the endoplasmic reticulum and alters protein stability; total loss of function; dbSNP:rs797044812." evidence="6 14">
    <original>R</original>
    <variation>W</variation>
    <location>
        <position position="586"/>
    </location>
</feature>
<feature type="sequence variant" id="VAR_001622" description="In DENT1; dbSNP:rs151340623." evidence="18">
    <original>S</original>
    <variation>P</variation>
    <location>
        <position position="590"/>
    </location>
</feature>
<feature type="sequence variant" id="VAR_065611" description="In LMWPHN; causes retention in the endoplasmic reticulum and alters protein stability; total loss of function." evidence="5 14">
    <original>I</original>
    <variation>K</variation>
    <location>
        <position position="594"/>
    </location>
</feature>
<feature type="sequence variant" id="VAR_001623" description="In DENT1; abolishes the chloride currents; total loss of function." evidence="14 21">
    <original>E</original>
    <variation>D</variation>
    <location>
        <position position="597"/>
    </location>
</feature>
<feature type="sequence variant" id="VAR_065612" description="In DENT1." evidence="6">
    <original>S</original>
    <variation>N</variation>
    <location>
        <position position="615"/>
    </location>
</feature>
<feature type="sequence variant" id="VAR_065613" description="In DENT1; delayed in processing of the protein and decrease in the stability of the mature complex glycosylated form causing lower cell surface expression; the early endosome distribution is normal; shows abolished current at the plasma membrane." evidence="6 17">
    <original>K</original>
    <variation>E</variation>
    <location>
        <position position="616"/>
    </location>
</feature>
<feature type="sequence variant" id="VAR_065614" description="In DENT1; delayed in processing of the protein and decrease in the stability of the mature complex glycosylated form causing lower cell surface expression; the early endosome distribution is normal; shows reduced current at the plasma membrane; dbSNP:rs273585650." evidence="12 17">
    <original>W</original>
    <variation>G</variation>
    <location>
        <position position="617"/>
    </location>
</feature>
<feature type="sequence variant" id="VAR_065615" description="In DENT1; dbSNP:rs144207967." evidence="6">
    <original>T</original>
    <variation>S</variation>
    <location>
        <position position="727"/>
    </location>
</feature>
<feature type="mutagenesis site" description="Abolishes proton transport, but not chloride transport." evidence="11">
    <original>E</original>
    <variation>A</variation>
    <location>
        <position position="281"/>
    </location>
</feature>
<feature type="mutagenesis site" description="Strongly decreased affinity for ATP, but no effect on chloride transport." evidence="11">
    <original>Y</original>
    <variation>A</variation>
    <location>
        <position position="687"/>
    </location>
</feature>
<feature type="mutagenesis site" description="No effect ATP binding or chloride transport." evidence="11">
    <original>S</original>
    <variation>A</variation>
    <location>
        <position position="688"/>
    </location>
</feature>
<feature type="mutagenesis site" description="Abolishes interaction with NEDD4 and NEDD4L." evidence="7">
    <original>Y</original>
    <variation>A</variation>
    <location>
        <position position="742"/>
    </location>
</feature>
<feature type="mutagenesis site" description="Strongly decreased affinity for ATP, but no effect on chloride transport." evidence="11">
    <original>D</original>
    <variation>A</variation>
    <location>
        <position position="797"/>
    </location>
</feature>
<feature type="sequence conflict" description="In Ref. 2; BAG51748." evidence="24" ref="2">
    <original>I</original>
    <variation>V</variation>
    <location>
        <position position="802"/>
    </location>
</feature>
<feature type="helix" evidence="28">
    <location>
        <begin position="652"/>
        <end position="655"/>
    </location>
</feature>
<feature type="strand" evidence="28">
    <location>
        <begin position="656"/>
        <end position="658"/>
    </location>
</feature>
<feature type="strand" evidence="28">
    <location>
        <begin position="668"/>
        <end position="671"/>
    </location>
</feature>
<feature type="helix" evidence="28">
    <location>
        <begin position="675"/>
        <end position="684"/>
    </location>
</feature>
<feature type="strand" evidence="28">
    <location>
        <begin position="688"/>
        <end position="694"/>
    </location>
</feature>
<feature type="turn" evidence="28">
    <location>
        <begin position="696"/>
        <end position="698"/>
    </location>
</feature>
<feature type="strand" evidence="28">
    <location>
        <begin position="700"/>
        <end position="706"/>
    </location>
</feature>
<feature type="helix" evidence="28">
    <location>
        <begin position="707"/>
        <end position="718"/>
    </location>
</feature>
<feature type="strand" evidence="28">
    <location>
        <begin position="729"/>
        <end position="731"/>
    </location>
</feature>
<feature type="strand" evidence="28">
    <location>
        <begin position="733"/>
        <end position="735"/>
    </location>
</feature>
<feature type="helix" evidence="28">
    <location>
        <begin position="750"/>
        <end position="752"/>
    </location>
</feature>
<feature type="strand" evidence="28">
    <location>
        <begin position="753"/>
        <end position="756"/>
    </location>
</feature>
<feature type="strand" evidence="28">
    <location>
        <begin position="759"/>
        <end position="761"/>
    </location>
</feature>
<feature type="helix" evidence="28">
    <location>
        <begin position="766"/>
        <end position="776"/>
    </location>
</feature>
<feature type="strand" evidence="28">
    <location>
        <begin position="779"/>
        <end position="785"/>
    </location>
</feature>
<feature type="strand" evidence="28">
    <location>
        <begin position="788"/>
        <end position="794"/>
    </location>
</feature>
<feature type="helix" evidence="28">
    <location>
        <begin position="795"/>
        <end position="805"/>
    </location>
</feature>
<name>CLCN5_HUMAN</name>
<gene>
    <name evidence="26" type="primary">CLCN5</name>
    <name type="synonym">CLCK2</name>
</gene>
<accession>P51795</accession>
<accession>A1L475</accession>
<accession>B3KPN6</accession>
<accession>Q5JQD5</accession>
<accession>Q7RTN8</accession>